<name>PRMA_CAMJ8</name>
<evidence type="ECO:0000255" key="1">
    <source>
        <dbReference type="HAMAP-Rule" id="MF_00735"/>
    </source>
</evidence>
<feature type="chain" id="PRO_1000072790" description="Ribosomal protein L11 methyltransferase">
    <location>
        <begin position="1"/>
        <end position="281"/>
    </location>
</feature>
<feature type="binding site" evidence="1">
    <location>
        <position position="133"/>
    </location>
    <ligand>
        <name>S-adenosyl-L-methionine</name>
        <dbReference type="ChEBI" id="CHEBI:59789"/>
    </ligand>
</feature>
<feature type="binding site" evidence="1">
    <location>
        <position position="154"/>
    </location>
    <ligand>
        <name>S-adenosyl-L-methionine</name>
        <dbReference type="ChEBI" id="CHEBI:59789"/>
    </ligand>
</feature>
<feature type="binding site" evidence="1">
    <location>
        <position position="175"/>
    </location>
    <ligand>
        <name>S-adenosyl-L-methionine</name>
        <dbReference type="ChEBI" id="CHEBI:59789"/>
    </ligand>
</feature>
<feature type="binding site" evidence="1">
    <location>
        <position position="216"/>
    </location>
    <ligand>
        <name>S-adenosyl-L-methionine</name>
        <dbReference type="ChEBI" id="CHEBI:59789"/>
    </ligand>
</feature>
<comment type="function">
    <text evidence="1">Methylates ribosomal protein L11.</text>
</comment>
<comment type="catalytic activity">
    <reaction evidence="1">
        <text>L-lysyl-[protein] + 3 S-adenosyl-L-methionine = N(6),N(6),N(6)-trimethyl-L-lysyl-[protein] + 3 S-adenosyl-L-homocysteine + 3 H(+)</text>
        <dbReference type="Rhea" id="RHEA:54192"/>
        <dbReference type="Rhea" id="RHEA-COMP:9752"/>
        <dbReference type="Rhea" id="RHEA-COMP:13826"/>
        <dbReference type="ChEBI" id="CHEBI:15378"/>
        <dbReference type="ChEBI" id="CHEBI:29969"/>
        <dbReference type="ChEBI" id="CHEBI:57856"/>
        <dbReference type="ChEBI" id="CHEBI:59789"/>
        <dbReference type="ChEBI" id="CHEBI:61961"/>
    </reaction>
</comment>
<comment type="subcellular location">
    <subcellularLocation>
        <location evidence="1">Cytoplasm</location>
    </subcellularLocation>
</comment>
<comment type="similarity">
    <text evidence="1">Belongs to the methyltransferase superfamily. PrmA family.</text>
</comment>
<reference key="1">
    <citation type="journal article" date="2007" name="J. Bacteriol.">
        <title>The complete genome sequence of Campylobacter jejuni strain 81116 (NCTC11828).</title>
        <authorList>
            <person name="Pearson B.M."/>
            <person name="Gaskin D.J.H."/>
            <person name="Segers R.P.A.M."/>
            <person name="Wells J.M."/>
            <person name="Nuijten P.J.M."/>
            <person name="van Vliet A.H.M."/>
        </authorList>
    </citation>
    <scope>NUCLEOTIDE SEQUENCE [LARGE SCALE GENOMIC DNA]</scope>
    <source>
        <strain>81116 / NCTC 11828</strain>
    </source>
</reference>
<dbReference type="EC" id="2.1.1.-" evidence="1"/>
<dbReference type="EMBL" id="CP000814">
    <property type="protein sequence ID" value="ABV52657.1"/>
    <property type="molecule type" value="Genomic_DNA"/>
</dbReference>
<dbReference type="RefSeq" id="WP_002866133.1">
    <property type="nucleotide sequence ID" value="NC_009839.1"/>
</dbReference>
<dbReference type="SMR" id="A8FMH0"/>
<dbReference type="KEGG" id="cju:C8J_1058"/>
<dbReference type="HOGENOM" id="CLU_049382_1_0_7"/>
<dbReference type="GO" id="GO:0005737">
    <property type="term" value="C:cytoplasm"/>
    <property type="evidence" value="ECO:0007669"/>
    <property type="project" value="UniProtKB-SubCell"/>
</dbReference>
<dbReference type="GO" id="GO:0016279">
    <property type="term" value="F:protein-lysine N-methyltransferase activity"/>
    <property type="evidence" value="ECO:0007669"/>
    <property type="project" value="RHEA"/>
</dbReference>
<dbReference type="GO" id="GO:0032259">
    <property type="term" value="P:methylation"/>
    <property type="evidence" value="ECO:0007669"/>
    <property type="project" value="UniProtKB-KW"/>
</dbReference>
<dbReference type="CDD" id="cd02440">
    <property type="entry name" value="AdoMet_MTases"/>
    <property type="match status" value="1"/>
</dbReference>
<dbReference type="Gene3D" id="3.40.50.150">
    <property type="entry name" value="Vaccinia Virus protein VP39"/>
    <property type="match status" value="1"/>
</dbReference>
<dbReference type="HAMAP" id="MF_00735">
    <property type="entry name" value="Methyltr_PrmA"/>
    <property type="match status" value="1"/>
</dbReference>
<dbReference type="InterPro" id="IPR050078">
    <property type="entry name" value="Ribosomal_L11_MeTrfase_PrmA"/>
</dbReference>
<dbReference type="InterPro" id="IPR004498">
    <property type="entry name" value="Ribosomal_PrmA_MeTrfase"/>
</dbReference>
<dbReference type="InterPro" id="IPR029063">
    <property type="entry name" value="SAM-dependent_MTases_sf"/>
</dbReference>
<dbReference type="NCBIfam" id="NF001786">
    <property type="entry name" value="PRK00517.2-4"/>
    <property type="match status" value="1"/>
</dbReference>
<dbReference type="PANTHER" id="PTHR43648">
    <property type="entry name" value="ELECTRON TRANSFER FLAVOPROTEIN BETA SUBUNIT LYSINE METHYLTRANSFERASE"/>
    <property type="match status" value="1"/>
</dbReference>
<dbReference type="PANTHER" id="PTHR43648:SF1">
    <property type="entry name" value="ELECTRON TRANSFER FLAVOPROTEIN BETA SUBUNIT LYSINE METHYLTRANSFERASE"/>
    <property type="match status" value="1"/>
</dbReference>
<dbReference type="Pfam" id="PF06325">
    <property type="entry name" value="PrmA"/>
    <property type="match status" value="1"/>
</dbReference>
<dbReference type="PIRSF" id="PIRSF000401">
    <property type="entry name" value="RPL11_MTase"/>
    <property type="match status" value="1"/>
</dbReference>
<dbReference type="SUPFAM" id="SSF53335">
    <property type="entry name" value="S-adenosyl-L-methionine-dependent methyltransferases"/>
    <property type="match status" value="1"/>
</dbReference>
<protein>
    <recommendedName>
        <fullName evidence="1">Ribosomal protein L11 methyltransferase</fullName>
        <shortName evidence="1">L11 Mtase</shortName>
        <ecNumber evidence="1">2.1.1.-</ecNumber>
    </recommendedName>
</protein>
<organism>
    <name type="scientific">Campylobacter jejuni subsp. jejuni serotype O:6 (strain 81116 / NCTC 11828)</name>
    <dbReference type="NCBI Taxonomy" id="407148"/>
    <lineage>
        <taxon>Bacteria</taxon>
        <taxon>Pseudomonadati</taxon>
        <taxon>Campylobacterota</taxon>
        <taxon>Epsilonproteobacteria</taxon>
        <taxon>Campylobacterales</taxon>
        <taxon>Campylobacteraceae</taxon>
        <taxon>Campylobacter</taxon>
    </lineage>
</organism>
<gene>
    <name evidence="1" type="primary">prmA</name>
    <name type="ordered locus">C8J_1058</name>
</gene>
<sequence>MQKKYYELFFIVEERYKNLFLDFAFDLGIEAIEEKDNGVYIRSHESLEELSWALEIFAQKLTTTFNLNHKIISNLSLVEKENKDWIQEYKKGIKPILVDNVYIHTTWQEEKKNFINIKINPALAFGSGHHESTYSCVKFLQKFSKSKLRALDLGCGSGILGIIMAKFGCNVEICDTDELAIDSSLENARLNGVDFHKAWCGSIDKANGLYNLIVANIIADVILILEKDIKNHLEDNAILILSGILDKYSTRIKEKFQDLELIDEMQINEWCSFVYKNNKKG</sequence>
<keyword id="KW-0963">Cytoplasm</keyword>
<keyword id="KW-0489">Methyltransferase</keyword>
<keyword id="KW-0949">S-adenosyl-L-methionine</keyword>
<keyword id="KW-0808">Transferase</keyword>
<accession>A8FMH0</accession>
<proteinExistence type="inferred from homology"/>